<protein>
    <recommendedName>
        <fullName evidence="1">Glutamate--tRNA ligase</fullName>
        <ecNumber evidence="1">6.1.1.17</ecNumber>
    </recommendedName>
    <alternativeName>
        <fullName evidence="1">Glutamyl-tRNA synthetase</fullName>
        <shortName evidence="1">GluRS</shortName>
    </alternativeName>
</protein>
<dbReference type="EC" id="6.1.1.17" evidence="1"/>
<dbReference type="EMBL" id="CP000512">
    <property type="protein sequence ID" value="ABM32449.1"/>
    <property type="molecule type" value="Genomic_DNA"/>
</dbReference>
<dbReference type="RefSeq" id="WP_011794995.1">
    <property type="nucleotide sequence ID" value="NC_008752.1"/>
</dbReference>
<dbReference type="SMR" id="A1TNB1"/>
<dbReference type="STRING" id="397945.Aave_1865"/>
<dbReference type="GeneID" id="79793125"/>
<dbReference type="KEGG" id="aav:Aave_1865"/>
<dbReference type="eggNOG" id="COG0008">
    <property type="taxonomic scope" value="Bacteria"/>
</dbReference>
<dbReference type="HOGENOM" id="CLU_015768_6_1_4"/>
<dbReference type="OrthoDB" id="9807503at2"/>
<dbReference type="Proteomes" id="UP000002596">
    <property type="component" value="Chromosome"/>
</dbReference>
<dbReference type="GO" id="GO:0005829">
    <property type="term" value="C:cytosol"/>
    <property type="evidence" value="ECO:0007669"/>
    <property type="project" value="TreeGrafter"/>
</dbReference>
<dbReference type="GO" id="GO:0005524">
    <property type="term" value="F:ATP binding"/>
    <property type="evidence" value="ECO:0007669"/>
    <property type="project" value="UniProtKB-UniRule"/>
</dbReference>
<dbReference type="GO" id="GO:0004818">
    <property type="term" value="F:glutamate-tRNA ligase activity"/>
    <property type="evidence" value="ECO:0007669"/>
    <property type="project" value="UniProtKB-UniRule"/>
</dbReference>
<dbReference type="GO" id="GO:0000049">
    <property type="term" value="F:tRNA binding"/>
    <property type="evidence" value="ECO:0007669"/>
    <property type="project" value="InterPro"/>
</dbReference>
<dbReference type="GO" id="GO:0008270">
    <property type="term" value="F:zinc ion binding"/>
    <property type="evidence" value="ECO:0007669"/>
    <property type="project" value="InterPro"/>
</dbReference>
<dbReference type="GO" id="GO:0006424">
    <property type="term" value="P:glutamyl-tRNA aminoacylation"/>
    <property type="evidence" value="ECO:0007669"/>
    <property type="project" value="UniProtKB-UniRule"/>
</dbReference>
<dbReference type="CDD" id="cd00808">
    <property type="entry name" value="GluRS_core"/>
    <property type="match status" value="1"/>
</dbReference>
<dbReference type="FunFam" id="3.40.50.620:FF:000007">
    <property type="entry name" value="Glutamate--tRNA ligase"/>
    <property type="match status" value="1"/>
</dbReference>
<dbReference type="Gene3D" id="1.10.10.350">
    <property type="match status" value="1"/>
</dbReference>
<dbReference type="Gene3D" id="3.40.50.620">
    <property type="entry name" value="HUPs"/>
    <property type="match status" value="1"/>
</dbReference>
<dbReference type="HAMAP" id="MF_00022">
    <property type="entry name" value="Glu_tRNA_synth_type1"/>
    <property type="match status" value="1"/>
</dbReference>
<dbReference type="InterPro" id="IPR045462">
    <property type="entry name" value="aa-tRNA-synth_I_cd-bd"/>
</dbReference>
<dbReference type="InterPro" id="IPR020751">
    <property type="entry name" value="aa-tRNA-synth_I_codon-bd_sub2"/>
</dbReference>
<dbReference type="InterPro" id="IPR001412">
    <property type="entry name" value="aa-tRNA-synth_I_CS"/>
</dbReference>
<dbReference type="InterPro" id="IPR008925">
    <property type="entry name" value="aa_tRNA-synth_I_cd-bd_sf"/>
</dbReference>
<dbReference type="InterPro" id="IPR004527">
    <property type="entry name" value="Glu-tRNA-ligase_bac/mito"/>
</dbReference>
<dbReference type="InterPro" id="IPR000924">
    <property type="entry name" value="Glu/Gln-tRNA-synth"/>
</dbReference>
<dbReference type="InterPro" id="IPR020058">
    <property type="entry name" value="Glu/Gln-tRNA-synth_Ib_cat-dom"/>
</dbReference>
<dbReference type="InterPro" id="IPR049940">
    <property type="entry name" value="GluQ/Sye"/>
</dbReference>
<dbReference type="InterPro" id="IPR033910">
    <property type="entry name" value="GluRS_core"/>
</dbReference>
<dbReference type="InterPro" id="IPR014729">
    <property type="entry name" value="Rossmann-like_a/b/a_fold"/>
</dbReference>
<dbReference type="NCBIfam" id="TIGR00464">
    <property type="entry name" value="gltX_bact"/>
    <property type="match status" value="1"/>
</dbReference>
<dbReference type="PANTHER" id="PTHR43311">
    <property type="entry name" value="GLUTAMATE--TRNA LIGASE"/>
    <property type="match status" value="1"/>
</dbReference>
<dbReference type="PANTHER" id="PTHR43311:SF2">
    <property type="entry name" value="GLUTAMATE--TRNA LIGASE, MITOCHONDRIAL-RELATED"/>
    <property type="match status" value="1"/>
</dbReference>
<dbReference type="Pfam" id="PF19269">
    <property type="entry name" value="Anticodon_2"/>
    <property type="match status" value="1"/>
</dbReference>
<dbReference type="Pfam" id="PF00749">
    <property type="entry name" value="tRNA-synt_1c"/>
    <property type="match status" value="1"/>
</dbReference>
<dbReference type="PRINTS" id="PR00987">
    <property type="entry name" value="TRNASYNTHGLU"/>
</dbReference>
<dbReference type="SUPFAM" id="SSF48163">
    <property type="entry name" value="An anticodon-binding domain of class I aminoacyl-tRNA synthetases"/>
    <property type="match status" value="1"/>
</dbReference>
<dbReference type="SUPFAM" id="SSF52374">
    <property type="entry name" value="Nucleotidylyl transferase"/>
    <property type="match status" value="1"/>
</dbReference>
<dbReference type="PROSITE" id="PS00178">
    <property type="entry name" value="AA_TRNA_LIGASE_I"/>
    <property type="match status" value="1"/>
</dbReference>
<sequence length="478" mass="53282">MSQSLSSASSSGAPQRVRTRFAPSPTGFIHLGNIRSALYPWAFARATGGDFILRIEDTDVERSSQAAVDVILEGMQWLGMEPDEGPFYQMQRMDRYKEVLAQMQAQGLVYPCYMSVAELDALRERQMQAKQKPRYDGTWRPEEGKTLPPVPEGVQPVLRFRNPVGGSVVWEDKVKGRIEIQNDELDDLVIARPDGTPTYNFCVVVDDIDMAITHVIRGDDHVNNTPRQINIFRALGKEPPVYAHLPTVLNEQGEKMSKRNGAKPVTQYRDEGYLPEAMVNYLARLGWSHGDDEIFSREQFLEWFDLDHLGRSAAQFDEAKLRWVNAQHLKATADERLAELVAPRLAARGIAQSELADGRLPRICALFKDRCDTLVALADWAHVFYGEVTPNEEERAKHVVDAVKPAIAALSDALAQCAWDKASIAAAFKEVLAAQGLKMPQLAMPVRVLTVGTAHTPSVDAVLELLGREKIAARLRTA</sequence>
<reference key="1">
    <citation type="submission" date="2006-12" db="EMBL/GenBank/DDBJ databases">
        <title>Complete sequence of Acidovorax avenae subsp. citrulli AAC00-1.</title>
        <authorList>
            <person name="Copeland A."/>
            <person name="Lucas S."/>
            <person name="Lapidus A."/>
            <person name="Barry K."/>
            <person name="Detter J.C."/>
            <person name="Glavina del Rio T."/>
            <person name="Dalin E."/>
            <person name="Tice H."/>
            <person name="Pitluck S."/>
            <person name="Kiss H."/>
            <person name="Brettin T."/>
            <person name="Bruce D."/>
            <person name="Han C."/>
            <person name="Tapia R."/>
            <person name="Gilna P."/>
            <person name="Schmutz J."/>
            <person name="Larimer F."/>
            <person name="Land M."/>
            <person name="Hauser L."/>
            <person name="Kyrpides N."/>
            <person name="Kim E."/>
            <person name="Stahl D."/>
            <person name="Richardson P."/>
        </authorList>
    </citation>
    <scope>NUCLEOTIDE SEQUENCE [LARGE SCALE GENOMIC DNA]</scope>
    <source>
        <strain>AAC00-1</strain>
    </source>
</reference>
<evidence type="ECO:0000255" key="1">
    <source>
        <dbReference type="HAMAP-Rule" id="MF_00022"/>
    </source>
</evidence>
<evidence type="ECO:0000256" key="2">
    <source>
        <dbReference type="SAM" id="MobiDB-lite"/>
    </source>
</evidence>
<keyword id="KW-0030">Aminoacyl-tRNA synthetase</keyword>
<keyword id="KW-0067">ATP-binding</keyword>
<keyword id="KW-0963">Cytoplasm</keyword>
<keyword id="KW-0436">Ligase</keyword>
<keyword id="KW-0547">Nucleotide-binding</keyword>
<keyword id="KW-0648">Protein biosynthesis</keyword>
<name>SYE_PARC0</name>
<accession>A1TNB1</accession>
<organism>
    <name type="scientific">Paracidovorax citrulli (strain AAC00-1)</name>
    <name type="common">Acidovorax citrulli</name>
    <dbReference type="NCBI Taxonomy" id="397945"/>
    <lineage>
        <taxon>Bacteria</taxon>
        <taxon>Pseudomonadati</taxon>
        <taxon>Pseudomonadota</taxon>
        <taxon>Betaproteobacteria</taxon>
        <taxon>Burkholderiales</taxon>
        <taxon>Comamonadaceae</taxon>
        <taxon>Paracidovorax</taxon>
    </lineage>
</organism>
<comment type="function">
    <text evidence="1">Catalyzes the attachment of glutamate to tRNA(Glu) in a two-step reaction: glutamate is first activated by ATP to form Glu-AMP and then transferred to the acceptor end of tRNA(Glu).</text>
</comment>
<comment type="catalytic activity">
    <reaction evidence="1">
        <text>tRNA(Glu) + L-glutamate + ATP = L-glutamyl-tRNA(Glu) + AMP + diphosphate</text>
        <dbReference type="Rhea" id="RHEA:23540"/>
        <dbReference type="Rhea" id="RHEA-COMP:9663"/>
        <dbReference type="Rhea" id="RHEA-COMP:9680"/>
        <dbReference type="ChEBI" id="CHEBI:29985"/>
        <dbReference type="ChEBI" id="CHEBI:30616"/>
        <dbReference type="ChEBI" id="CHEBI:33019"/>
        <dbReference type="ChEBI" id="CHEBI:78442"/>
        <dbReference type="ChEBI" id="CHEBI:78520"/>
        <dbReference type="ChEBI" id="CHEBI:456215"/>
        <dbReference type="EC" id="6.1.1.17"/>
    </reaction>
</comment>
<comment type="subunit">
    <text evidence="1">Monomer.</text>
</comment>
<comment type="subcellular location">
    <subcellularLocation>
        <location evidence="1">Cytoplasm</location>
    </subcellularLocation>
</comment>
<comment type="similarity">
    <text evidence="1">Belongs to the class-I aminoacyl-tRNA synthetase family. Glutamate--tRNA ligase type 1 subfamily.</text>
</comment>
<feature type="chain" id="PRO_0000330948" description="Glutamate--tRNA ligase">
    <location>
        <begin position="1"/>
        <end position="478"/>
    </location>
</feature>
<feature type="region of interest" description="Disordered" evidence="2">
    <location>
        <begin position="130"/>
        <end position="153"/>
    </location>
</feature>
<feature type="short sequence motif" description="'HIGH' region" evidence="1">
    <location>
        <begin position="23"/>
        <end position="33"/>
    </location>
</feature>
<feature type="short sequence motif" description="'KMSKS' region" evidence="1">
    <location>
        <begin position="255"/>
        <end position="259"/>
    </location>
</feature>
<feature type="compositionally biased region" description="Basic and acidic residues" evidence="2">
    <location>
        <begin position="130"/>
        <end position="145"/>
    </location>
</feature>
<feature type="binding site" evidence="1">
    <location>
        <position position="258"/>
    </location>
    <ligand>
        <name>ATP</name>
        <dbReference type="ChEBI" id="CHEBI:30616"/>
    </ligand>
</feature>
<proteinExistence type="inferred from homology"/>
<gene>
    <name evidence="1" type="primary">gltX</name>
    <name type="ordered locus">Aave_1865</name>
</gene>